<comment type="similarity">
    <text evidence="1">Belongs to the UPF0213 family.</text>
</comment>
<gene>
    <name evidence="1" type="primary">yhbQ</name>
    <name type="ordered locus">EcHS_A3347</name>
</gene>
<accession>A8A4X1</accession>
<evidence type="ECO:0000255" key="1">
    <source>
        <dbReference type="HAMAP-Rule" id="MF_01029"/>
    </source>
</evidence>
<protein>
    <recommendedName>
        <fullName evidence="1">UPF0213 protein YhbQ</fullName>
    </recommendedName>
</protein>
<name>YHBQ_ECOHS</name>
<feature type="chain" id="PRO_1000063662" description="UPF0213 protein YhbQ">
    <location>
        <begin position="1"/>
        <end position="100"/>
    </location>
</feature>
<feature type="domain" description="GIY-YIG" evidence="1">
    <location>
        <begin position="2"/>
        <end position="77"/>
    </location>
</feature>
<proteinExistence type="inferred from homology"/>
<dbReference type="EMBL" id="CP000802">
    <property type="protein sequence ID" value="ABV07575.1"/>
    <property type="molecule type" value="Genomic_DNA"/>
</dbReference>
<dbReference type="RefSeq" id="WP_000189314.1">
    <property type="nucleotide sequence ID" value="NC_009800.1"/>
</dbReference>
<dbReference type="SMR" id="A8A4X1"/>
<dbReference type="GeneID" id="93778829"/>
<dbReference type="KEGG" id="ecx:EcHS_A3347"/>
<dbReference type="HOGENOM" id="CLU_135650_0_1_6"/>
<dbReference type="CDD" id="cd10456">
    <property type="entry name" value="GIY-YIG_UPF0213"/>
    <property type="match status" value="1"/>
</dbReference>
<dbReference type="FunFam" id="3.40.1440.10:FF:000002">
    <property type="entry name" value="UPF0213 protein YhbQ"/>
    <property type="match status" value="1"/>
</dbReference>
<dbReference type="Gene3D" id="3.40.1440.10">
    <property type="entry name" value="GIY-YIG endonuclease"/>
    <property type="match status" value="1"/>
</dbReference>
<dbReference type="HAMAP" id="MF_01029">
    <property type="entry name" value="UPF0213"/>
    <property type="match status" value="1"/>
</dbReference>
<dbReference type="InterPro" id="IPR000305">
    <property type="entry name" value="GIY-YIG_endonuc"/>
</dbReference>
<dbReference type="InterPro" id="IPR035901">
    <property type="entry name" value="GIY-YIG_endonuc_sf"/>
</dbReference>
<dbReference type="InterPro" id="IPR050190">
    <property type="entry name" value="UPF0213_domain"/>
</dbReference>
<dbReference type="InterPro" id="IPR022992">
    <property type="entry name" value="UPF0213_GIY-YIG_endonuc"/>
</dbReference>
<dbReference type="PANTHER" id="PTHR34477">
    <property type="entry name" value="UPF0213 PROTEIN YHBQ"/>
    <property type="match status" value="1"/>
</dbReference>
<dbReference type="PANTHER" id="PTHR34477:SF1">
    <property type="entry name" value="UPF0213 PROTEIN YHBQ"/>
    <property type="match status" value="1"/>
</dbReference>
<dbReference type="Pfam" id="PF01541">
    <property type="entry name" value="GIY-YIG"/>
    <property type="match status" value="1"/>
</dbReference>
<dbReference type="SMART" id="SM00465">
    <property type="entry name" value="GIYc"/>
    <property type="match status" value="1"/>
</dbReference>
<dbReference type="SUPFAM" id="SSF82771">
    <property type="entry name" value="GIY-YIG endonuclease"/>
    <property type="match status" value="1"/>
</dbReference>
<dbReference type="PROSITE" id="PS50164">
    <property type="entry name" value="GIY_YIG"/>
    <property type="match status" value="1"/>
</dbReference>
<organism>
    <name type="scientific">Escherichia coli O9:H4 (strain HS)</name>
    <dbReference type="NCBI Taxonomy" id="331112"/>
    <lineage>
        <taxon>Bacteria</taxon>
        <taxon>Pseudomonadati</taxon>
        <taxon>Pseudomonadota</taxon>
        <taxon>Gammaproteobacteria</taxon>
        <taxon>Enterobacterales</taxon>
        <taxon>Enterobacteriaceae</taxon>
        <taxon>Escherichia</taxon>
    </lineage>
</organism>
<reference key="1">
    <citation type="journal article" date="2008" name="J. Bacteriol.">
        <title>The pangenome structure of Escherichia coli: comparative genomic analysis of E. coli commensal and pathogenic isolates.</title>
        <authorList>
            <person name="Rasko D.A."/>
            <person name="Rosovitz M.J."/>
            <person name="Myers G.S.A."/>
            <person name="Mongodin E.F."/>
            <person name="Fricke W.F."/>
            <person name="Gajer P."/>
            <person name="Crabtree J."/>
            <person name="Sebaihia M."/>
            <person name="Thomson N.R."/>
            <person name="Chaudhuri R."/>
            <person name="Henderson I.R."/>
            <person name="Sperandio V."/>
            <person name="Ravel J."/>
        </authorList>
    </citation>
    <scope>NUCLEOTIDE SEQUENCE [LARGE SCALE GENOMIC DNA]</scope>
    <source>
        <strain>HS</strain>
    </source>
</reference>
<sequence>MTPWFLYLIRTADNKLYTGITTDVERRYQQHQSGKGAKALRGKGELTLAFSAPVGDRSLALRAEYRVKQLTKRQKERLVAEGAGFAELLSSLQTPEIKSD</sequence>